<comment type="subcellular location">
    <subcellularLocation>
        <location evidence="1">Secreted</location>
    </subcellularLocation>
</comment>
<comment type="tissue specificity">
    <text>Expressed by the venom duct.</text>
</comment>
<comment type="domain">
    <text>The cysteine framework is XI (C-C-CC-CC-C-C).</text>
</comment>
<comment type="similarity">
    <text evidence="4">Belongs to the conotoxin I1 superfamily.</text>
</comment>
<reference key="1">
    <citation type="journal article" date="2010" name="Mol. Phylogenet. Evol.">
        <title>Evolution of Conus peptide toxins: analysis of Conus californicus Reeve, 1844.</title>
        <authorList>
            <person name="Biggs J.S."/>
            <person name="Watkins M."/>
            <person name="Puillandre N."/>
            <person name="Ownby J.P."/>
            <person name="Lopez-Vera E."/>
            <person name="Christensen S."/>
            <person name="Moreno K.J."/>
            <person name="Bernaldez J."/>
            <person name="Licea-Navarro A."/>
            <person name="Corneli P.S."/>
            <person name="Olivera B.M."/>
        </authorList>
    </citation>
    <scope>NUCLEOTIDE SEQUENCE [GENOMIC DNA]</scope>
</reference>
<dbReference type="EMBL" id="FJ959121">
    <property type="protein sequence ID" value="ADB93091.1"/>
    <property type="molecule type" value="Genomic_DNA"/>
</dbReference>
<dbReference type="SMR" id="D6C4H9"/>
<dbReference type="ConoServer" id="4007">
    <property type="toxin name" value="Cal11.1 precursor"/>
</dbReference>
<dbReference type="GO" id="GO:0005576">
    <property type="term" value="C:extracellular region"/>
    <property type="evidence" value="ECO:0007669"/>
    <property type="project" value="UniProtKB-SubCell"/>
</dbReference>
<dbReference type="GO" id="GO:0008200">
    <property type="term" value="F:ion channel inhibitor activity"/>
    <property type="evidence" value="ECO:0007669"/>
    <property type="project" value="InterPro"/>
</dbReference>
<dbReference type="GO" id="GO:0090729">
    <property type="term" value="F:toxin activity"/>
    <property type="evidence" value="ECO:0007669"/>
    <property type="project" value="UniProtKB-KW"/>
</dbReference>
<dbReference type="InterPro" id="IPR004214">
    <property type="entry name" value="Conotoxin"/>
</dbReference>
<dbReference type="Pfam" id="PF02950">
    <property type="entry name" value="Conotoxin"/>
    <property type="match status" value="1"/>
</dbReference>
<dbReference type="PROSITE" id="PS60019">
    <property type="entry name" value="I_CONOTOXIN"/>
    <property type="match status" value="1"/>
</dbReference>
<name>I1B1_CONCL</name>
<evidence type="ECO:0000250" key="1"/>
<evidence type="ECO:0000250" key="2">
    <source>
        <dbReference type="UniProtKB" id="Q7Z094"/>
    </source>
</evidence>
<evidence type="ECO:0000255" key="3"/>
<evidence type="ECO:0000305" key="4"/>
<sequence length="78" mass="8797">MKLALTFLLILMILPLTTGGKKSDNQALKRLGARKFNENLSELNSACDDAWETCAWSRTCCSRNCCRGICVSRYYECP</sequence>
<keyword id="KW-0165">Cleavage on pair of basic residues</keyword>
<keyword id="KW-1015">Disulfide bond</keyword>
<keyword id="KW-0528">Neurotoxin</keyword>
<keyword id="KW-0964">Secreted</keyword>
<keyword id="KW-0732">Signal</keyword>
<keyword id="KW-0800">Toxin</keyword>
<feature type="signal peptide" evidence="3">
    <location>
        <begin position="1"/>
        <end position="19"/>
    </location>
</feature>
<feature type="propeptide" id="PRO_0000415006" evidence="1">
    <location>
        <begin position="20"/>
        <end position="33"/>
    </location>
</feature>
<feature type="peptide" id="PRO_0000415007" description="Conotoxin Cl11.1">
    <location>
        <begin position="36"/>
        <end position="78"/>
    </location>
</feature>
<feature type="disulfide bond" evidence="2">
    <location>
        <begin position="47"/>
        <end position="61"/>
    </location>
</feature>
<feature type="disulfide bond" evidence="2">
    <location>
        <begin position="54"/>
        <end position="66"/>
    </location>
</feature>
<feature type="disulfide bond" evidence="2">
    <location>
        <begin position="60"/>
        <end position="70"/>
    </location>
</feature>
<feature type="disulfide bond" evidence="2">
    <location>
        <begin position="65"/>
        <end position="77"/>
    </location>
</feature>
<protein>
    <recommendedName>
        <fullName>Conotoxin Cl11.1</fullName>
    </recommendedName>
</protein>
<accession>D6C4H9</accession>
<proteinExistence type="inferred from homology"/>
<organism>
    <name type="scientific">Californiconus californicus</name>
    <name type="common">California cone</name>
    <name type="synonym">Conus californicus</name>
    <dbReference type="NCBI Taxonomy" id="1736779"/>
    <lineage>
        <taxon>Eukaryota</taxon>
        <taxon>Metazoa</taxon>
        <taxon>Spiralia</taxon>
        <taxon>Lophotrochozoa</taxon>
        <taxon>Mollusca</taxon>
        <taxon>Gastropoda</taxon>
        <taxon>Caenogastropoda</taxon>
        <taxon>Neogastropoda</taxon>
        <taxon>Conoidea</taxon>
        <taxon>Conidae</taxon>
        <taxon>Californiconus</taxon>
    </lineage>
</organism>